<comment type="function">
    <text evidence="1">Plays a role in peptidoglycan recycling by cleaving the terminal beta-1,4-linked N-acetylglucosamine (GlcNAc) from peptide-linked peptidoglycan fragments, giving rise to free GlcNAc, anhydro-N-acetylmuramic acid and anhydro-N-acetylmuramic acid-linked peptides.</text>
</comment>
<comment type="catalytic activity">
    <reaction evidence="1">
        <text>Hydrolysis of terminal non-reducing N-acetyl-D-hexosamine residues in N-acetyl-beta-D-hexosaminides.</text>
        <dbReference type="EC" id="3.2.1.52"/>
    </reaction>
</comment>
<comment type="pathway">
    <text evidence="1">Cell wall biogenesis; peptidoglycan recycling.</text>
</comment>
<comment type="subunit">
    <text evidence="2">Monomer.</text>
</comment>
<comment type="subcellular location">
    <subcellularLocation>
        <location evidence="1">Cytoplasm</location>
    </subcellularLocation>
</comment>
<comment type="similarity">
    <text evidence="1">Belongs to the glycosyl hydrolase 3 family. NagZ subfamily.</text>
</comment>
<feature type="chain" id="PRO_0000210786" description="Beta-hexosaminidase">
    <location>
        <begin position="1"/>
        <end position="341"/>
    </location>
</feature>
<feature type="active site" description="Proton donor/acceptor" evidence="1">
    <location>
        <position position="176"/>
    </location>
</feature>
<feature type="active site" description="Nucleophile" evidence="1">
    <location>
        <position position="248"/>
    </location>
</feature>
<feature type="binding site" evidence="1">
    <location>
        <position position="62"/>
    </location>
    <ligand>
        <name>substrate</name>
    </ligand>
</feature>
<feature type="binding site" evidence="1">
    <location>
        <position position="70"/>
    </location>
    <ligand>
        <name>substrate</name>
    </ligand>
</feature>
<feature type="binding site" evidence="1">
    <location>
        <position position="133"/>
    </location>
    <ligand>
        <name>substrate</name>
    </ligand>
</feature>
<feature type="binding site" evidence="1">
    <location>
        <begin position="163"/>
        <end position="164"/>
    </location>
    <ligand>
        <name>substrate</name>
    </ligand>
</feature>
<feature type="site" description="Important for catalytic activity" evidence="1">
    <location>
        <position position="174"/>
    </location>
</feature>
<proteinExistence type="inferred from homology"/>
<protein>
    <recommendedName>
        <fullName evidence="1">Beta-hexosaminidase</fullName>
        <ecNumber evidence="1">3.2.1.52</ecNumber>
    </recommendedName>
    <alternativeName>
        <fullName evidence="1">Beta-N-acetylhexosaminidase</fullName>
    </alternativeName>
    <alternativeName>
        <fullName evidence="1">N-acetyl-beta-glucosaminidase</fullName>
    </alternativeName>
</protein>
<keyword id="KW-0131">Cell cycle</keyword>
<keyword id="KW-0132">Cell division</keyword>
<keyword id="KW-0133">Cell shape</keyword>
<keyword id="KW-0961">Cell wall biogenesis/degradation</keyword>
<keyword id="KW-0963">Cytoplasm</keyword>
<keyword id="KW-0326">Glycosidase</keyword>
<keyword id="KW-0378">Hydrolase</keyword>
<keyword id="KW-0573">Peptidoglycan synthesis</keyword>
<keyword id="KW-1185">Reference proteome</keyword>
<dbReference type="EC" id="3.2.1.52" evidence="1"/>
<dbReference type="EMBL" id="AE014075">
    <property type="protein sequence ID" value="AAN79850.1"/>
    <property type="molecule type" value="Genomic_DNA"/>
</dbReference>
<dbReference type="RefSeq" id="WP_000529307.1">
    <property type="nucleotide sequence ID" value="NZ_CP051263.1"/>
</dbReference>
<dbReference type="SMR" id="Q8FIN2"/>
<dbReference type="STRING" id="199310.c1380"/>
<dbReference type="CAZy" id="GH3">
    <property type="family name" value="Glycoside Hydrolase Family 3"/>
</dbReference>
<dbReference type="KEGG" id="ecc:c1380"/>
<dbReference type="eggNOG" id="COG1472">
    <property type="taxonomic scope" value="Bacteria"/>
</dbReference>
<dbReference type="HOGENOM" id="CLU_008392_0_0_6"/>
<dbReference type="BioCyc" id="ECOL199310:C1380-MONOMER"/>
<dbReference type="UniPathway" id="UPA00544"/>
<dbReference type="Proteomes" id="UP000001410">
    <property type="component" value="Chromosome"/>
</dbReference>
<dbReference type="GO" id="GO:0005737">
    <property type="term" value="C:cytoplasm"/>
    <property type="evidence" value="ECO:0007669"/>
    <property type="project" value="UniProtKB-SubCell"/>
</dbReference>
<dbReference type="GO" id="GO:0004563">
    <property type="term" value="F:beta-N-acetylhexosaminidase activity"/>
    <property type="evidence" value="ECO:0007669"/>
    <property type="project" value="UniProtKB-UniRule"/>
</dbReference>
<dbReference type="GO" id="GO:0005975">
    <property type="term" value="P:carbohydrate metabolic process"/>
    <property type="evidence" value="ECO:0007669"/>
    <property type="project" value="InterPro"/>
</dbReference>
<dbReference type="GO" id="GO:0051301">
    <property type="term" value="P:cell division"/>
    <property type="evidence" value="ECO:0007669"/>
    <property type="project" value="UniProtKB-KW"/>
</dbReference>
<dbReference type="GO" id="GO:0071555">
    <property type="term" value="P:cell wall organization"/>
    <property type="evidence" value="ECO:0007669"/>
    <property type="project" value="UniProtKB-KW"/>
</dbReference>
<dbReference type="GO" id="GO:0009252">
    <property type="term" value="P:peptidoglycan biosynthetic process"/>
    <property type="evidence" value="ECO:0007669"/>
    <property type="project" value="UniProtKB-KW"/>
</dbReference>
<dbReference type="GO" id="GO:0009254">
    <property type="term" value="P:peptidoglycan turnover"/>
    <property type="evidence" value="ECO:0007669"/>
    <property type="project" value="UniProtKB-UniRule"/>
</dbReference>
<dbReference type="GO" id="GO:0008360">
    <property type="term" value="P:regulation of cell shape"/>
    <property type="evidence" value="ECO:0007669"/>
    <property type="project" value="UniProtKB-KW"/>
</dbReference>
<dbReference type="FunFam" id="3.20.20.300:FF:000001">
    <property type="entry name" value="Beta-hexosaminidase"/>
    <property type="match status" value="1"/>
</dbReference>
<dbReference type="Gene3D" id="3.20.20.300">
    <property type="entry name" value="Glycoside hydrolase, family 3, N-terminal domain"/>
    <property type="match status" value="1"/>
</dbReference>
<dbReference type="HAMAP" id="MF_00364">
    <property type="entry name" value="NagZ"/>
    <property type="match status" value="1"/>
</dbReference>
<dbReference type="InterPro" id="IPR022956">
    <property type="entry name" value="Beta_hexosaminidase_bac"/>
</dbReference>
<dbReference type="InterPro" id="IPR019800">
    <property type="entry name" value="Glyco_hydro_3_AS"/>
</dbReference>
<dbReference type="InterPro" id="IPR001764">
    <property type="entry name" value="Glyco_hydro_3_N"/>
</dbReference>
<dbReference type="InterPro" id="IPR036962">
    <property type="entry name" value="Glyco_hydro_3_N_sf"/>
</dbReference>
<dbReference type="InterPro" id="IPR017853">
    <property type="entry name" value="Glycoside_hydrolase_SF"/>
</dbReference>
<dbReference type="InterPro" id="IPR050226">
    <property type="entry name" value="NagZ_Beta-hexosaminidase"/>
</dbReference>
<dbReference type="NCBIfam" id="NF003740">
    <property type="entry name" value="PRK05337.1"/>
    <property type="match status" value="1"/>
</dbReference>
<dbReference type="PANTHER" id="PTHR30480:SF13">
    <property type="entry name" value="BETA-HEXOSAMINIDASE"/>
    <property type="match status" value="1"/>
</dbReference>
<dbReference type="PANTHER" id="PTHR30480">
    <property type="entry name" value="BETA-HEXOSAMINIDASE-RELATED"/>
    <property type="match status" value="1"/>
</dbReference>
<dbReference type="Pfam" id="PF00933">
    <property type="entry name" value="Glyco_hydro_3"/>
    <property type="match status" value="1"/>
</dbReference>
<dbReference type="SUPFAM" id="SSF51445">
    <property type="entry name" value="(Trans)glycosidases"/>
    <property type="match status" value="1"/>
</dbReference>
<dbReference type="PROSITE" id="PS00775">
    <property type="entry name" value="GLYCOSYL_HYDROL_F3"/>
    <property type="match status" value="1"/>
</dbReference>
<name>NAGZ_ECOL6</name>
<sequence>MGPVMLDVEGYELDAEEREILAHPLVGGLILFTRNYHDPAQLRELVRQIRAASRNHLVVAVDQEGGRVQRFREGFTRLPAAQSFAALLGMEEGGKLGQEAGWLMASEMIAMDIDISFAPVLDVGHISAAIGERSYHADPQKALAIASRFIDGMHEAGMKTTGKHFPGHGAVTADSHKETPCDPRPQAEIRAKDMSVFSSLIRENKLDAIMPAHVIYSDVDPRPASASPYWLKAVLRQELGFDGVIFSDDLSMEGAAIMGSYAERGQASLDAGCDMILVCNNRKGAVSVLDNLSPIKAERVTRLYHKGSFSRQELMDSARWKAISARLNQLHERWQEEKAGH</sequence>
<organism>
    <name type="scientific">Escherichia coli O6:H1 (strain CFT073 / ATCC 700928 / UPEC)</name>
    <dbReference type="NCBI Taxonomy" id="199310"/>
    <lineage>
        <taxon>Bacteria</taxon>
        <taxon>Pseudomonadati</taxon>
        <taxon>Pseudomonadota</taxon>
        <taxon>Gammaproteobacteria</taxon>
        <taxon>Enterobacterales</taxon>
        <taxon>Enterobacteriaceae</taxon>
        <taxon>Escherichia</taxon>
    </lineage>
</organism>
<reference key="1">
    <citation type="journal article" date="2002" name="Proc. Natl. Acad. Sci. U.S.A.">
        <title>Extensive mosaic structure revealed by the complete genome sequence of uropathogenic Escherichia coli.</title>
        <authorList>
            <person name="Welch R.A."/>
            <person name="Burland V."/>
            <person name="Plunkett G. III"/>
            <person name="Redford P."/>
            <person name="Roesch P."/>
            <person name="Rasko D."/>
            <person name="Buckles E.L."/>
            <person name="Liou S.-R."/>
            <person name="Boutin A."/>
            <person name="Hackett J."/>
            <person name="Stroud D."/>
            <person name="Mayhew G.F."/>
            <person name="Rose D.J."/>
            <person name="Zhou S."/>
            <person name="Schwartz D.C."/>
            <person name="Perna N.T."/>
            <person name="Mobley H.L.T."/>
            <person name="Donnenberg M.S."/>
            <person name="Blattner F.R."/>
        </authorList>
    </citation>
    <scope>NUCLEOTIDE SEQUENCE [LARGE SCALE GENOMIC DNA]</scope>
    <source>
        <strain>CFT073 / ATCC 700928 / UPEC</strain>
    </source>
</reference>
<accession>Q8FIN2</accession>
<gene>
    <name evidence="1" type="primary">nagZ</name>
    <name type="ordered locus">c1380</name>
</gene>
<evidence type="ECO:0000255" key="1">
    <source>
        <dbReference type="HAMAP-Rule" id="MF_00364"/>
    </source>
</evidence>
<evidence type="ECO:0000305" key="2"/>